<accession>Q6NVJ5</accession>
<organism>
    <name type="scientific">Danio rerio</name>
    <name type="common">Zebrafish</name>
    <name type="synonym">Brachydanio rerio</name>
    <dbReference type="NCBI Taxonomy" id="7955"/>
    <lineage>
        <taxon>Eukaryota</taxon>
        <taxon>Metazoa</taxon>
        <taxon>Chordata</taxon>
        <taxon>Craniata</taxon>
        <taxon>Vertebrata</taxon>
        <taxon>Euteleostomi</taxon>
        <taxon>Actinopterygii</taxon>
        <taxon>Neopterygii</taxon>
        <taxon>Teleostei</taxon>
        <taxon>Ostariophysi</taxon>
        <taxon>Cypriniformes</taxon>
        <taxon>Danionidae</taxon>
        <taxon>Danioninae</taxon>
        <taxon>Danio</taxon>
    </lineage>
</organism>
<feature type="chain" id="PRO_0000318738" description="Disco-interacting protein 2 homolog B-A">
    <location>
        <begin position="1"/>
        <end position="1577"/>
    </location>
</feature>
<feature type="domain" description="DMAP1-binding" evidence="2">
    <location>
        <begin position="7"/>
        <end position="124"/>
    </location>
</feature>
<feature type="region of interest" description="Disordered" evidence="3">
    <location>
        <begin position="109"/>
        <end position="148"/>
    </location>
</feature>
<feature type="region of interest" description="Disordered" evidence="3">
    <location>
        <begin position="173"/>
        <end position="204"/>
    </location>
</feature>
<feature type="region of interest" description="Disordered" evidence="3">
    <location>
        <begin position="217"/>
        <end position="239"/>
    </location>
</feature>
<feature type="region of interest" description="Disordered" evidence="3">
    <location>
        <begin position="253"/>
        <end position="273"/>
    </location>
</feature>
<feature type="compositionally biased region" description="Polar residues" evidence="3">
    <location>
        <begin position="124"/>
        <end position="140"/>
    </location>
</feature>
<feature type="compositionally biased region" description="Low complexity" evidence="3">
    <location>
        <begin position="176"/>
        <end position="187"/>
    </location>
</feature>
<feature type="compositionally biased region" description="Polar residues" evidence="3">
    <location>
        <begin position="217"/>
        <end position="236"/>
    </location>
</feature>
<protein>
    <recommendedName>
        <fullName>Disco-interacting protein 2 homolog B-A</fullName>
        <shortName>DIP2 homolog B-A</shortName>
    </recommendedName>
</protein>
<reference key="1">
    <citation type="submission" date="2004-03" db="EMBL/GenBank/DDBJ databases">
        <authorList>
            <consortium name="NIH - Zebrafish Gene Collection (ZGC) project"/>
        </authorList>
    </citation>
    <scope>NUCLEOTIDE SEQUENCE [LARGE SCALE MRNA]</scope>
    <source>
        <tissue>Embryo</tissue>
    </source>
</reference>
<proteinExistence type="evidence at transcript level"/>
<dbReference type="EMBL" id="BC068015">
    <property type="protein sequence ID" value="AAH68015.1"/>
    <property type="molecule type" value="mRNA"/>
</dbReference>
<dbReference type="RefSeq" id="NP_998128.1">
    <property type="nucleotide sequence ID" value="NM_212963.1"/>
</dbReference>
<dbReference type="SMR" id="Q6NVJ5"/>
<dbReference type="FunCoup" id="Q6NVJ5">
    <property type="interactions" value="1365"/>
</dbReference>
<dbReference type="STRING" id="7955.ENSDARP00000019936"/>
<dbReference type="PaxDb" id="7955-ENSDARP00000019936"/>
<dbReference type="Ensembl" id="ENSDART00000019521">
    <property type="protein sequence ID" value="ENSDARP00000019936"/>
    <property type="gene ID" value="ENSDARG00000005350"/>
</dbReference>
<dbReference type="GeneID" id="405899"/>
<dbReference type="KEGG" id="dre:405899"/>
<dbReference type="AGR" id="ZFIN:ZDB-GENE-040426-2305"/>
<dbReference type="CTD" id="405899"/>
<dbReference type="ZFIN" id="ZDB-GENE-040426-2305">
    <property type="gene designation" value="dip2ba"/>
</dbReference>
<dbReference type="eggNOG" id="KOG3628">
    <property type="taxonomic scope" value="Eukaryota"/>
</dbReference>
<dbReference type="HOGENOM" id="CLU_001345_0_0_1"/>
<dbReference type="InParanoid" id="Q6NVJ5"/>
<dbReference type="OMA" id="FYACLYI"/>
<dbReference type="OrthoDB" id="69964at2759"/>
<dbReference type="PhylomeDB" id="Q6NVJ5"/>
<dbReference type="TreeFam" id="TF312871"/>
<dbReference type="PRO" id="PR:Q6NVJ5"/>
<dbReference type="Proteomes" id="UP000000437">
    <property type="component" value="Chromosome 23"/>
</dbReference>
<dbReference type="Bgee" id="ENSDARG00000005350">
    <property type="expression patterns" value="Expressed in heart and 26 other cell types or tissues"/>
</dbReference>
<dbReference type="GO" id="GO:0030424">
    <property type="term" value="C:axon"/>
    <property type="evidence" value="ECO:0000250"/>
    <property type="project" value="UniProtKB"/>
</dbReference>
<dbReference type="GO" id="GO:0030425">
    <property type="term" value="C:dendrite"/>
    <property type="evidence" value="ECO:0000250"/>
    <property type="project" value="UniProtKB"/>
</dbReference>
<dbReference type="GO" id="GO:0043204">
    <property type="term" value="C:perikaryon"/>
    <property type="evidence" value="ECO:0000250"/>
    <property type="project" value="UniProtKB"/>
</dbReference>
<dbReference type="GO" id="GO:0030517">
    <property type="term" value="P:negative regulation of axon extension"/>
    <property type="evidence" value="ECO:0000250"/>
    <property type="project" value="UniProtKB"/>
</dbReference>
<dbReference type="GO" id="GO:0007399">
    <property type="term" value="P:nervous system development"/>
    <property type="evidence" value="ECO:0007669"/>
    <property type="project" value="UniProtKB-KW"/>
</dbReference>
<dbReference type="GO" id="GO:2000758">
    <property type="term" value="P:positive regulation of peptidyl-lysine acetylation"/>
    <property type="evidence" value="ECO:0000250"/>
    <property type="project" value="UniProtKB"/>
</dbReference>
<dbReference type="CDD" id="cd05905">
    <property type="entry name" value="Dip2"/>
    <property type="match status" value="2"/>
</dbReference>
<dbReference type="FunFam" id="3.30.300.30:FF:000003">
    <property type="entry name" value="DIP2 disco-interacting protein 2 homolog A"/>
    <property type="match status" value="1"/>
</dbReference>
<dbReference type="FunFam" id="3.30.300.30:FF:000001">
    <property type="entry name" value="DIP2 disco-interacting protein 2 homolog C"/>
    <property type="match status" value="1"/>
</dbReference>
<dbReference type="FunFam" id="3.40.50.12780:FF:000002">
    <property type="entry name" value="Disco interacting protein 2 homolog B"/>
    <property type="match status" value="1"/>
</dbReference>
<dbReference type="Gene3D" id="3.30.300.30">
    <property type="match status" value="2"/>
</dbReference>
<dbReference type="Gene3D" id="3.40.50.12780">
    <property type="entry name" value="N-terminal domain of ligase-like"/>
    <property type="match status" value="2"/>
</dbReference>
<dbReference type="InterPro" id="IPR025110">
    <property type="entry name" value="AMP-bd_C"/>
</dbReference>
<dbReference type="InterPro" id="IPR045851">
    <property type="entry name" value="AMP-bd_C_sf"/>
</dbReference>
<dbReference type="InterPro" id="IPR000873">
    <property type="entry name" value="AMP-dep_synth/lig_dom"/>
</dbReference>
<dbReference type="InterPro" id="IPR042099">
    <property type="entry name" value="ANL_N_sf"/>
</dbReference>
<dbReference type="InterPro" id="IPR037337">
    <property type="entry name" value="Dip2-like_dom"/>
</dbReference>
<dbReference type="InterPro" id="IPR010506">
    <property type="entry name" value="DMAP1-bd"/>
</dbReference>
<dbReference type="PANTHER" id="PTHR22754">
    <property type="entry name" value="DISCO-INTERACTING PROTEIN 2 DIP2 -RELATED"/>
    <property type="match status" value="1"/>
</dbReference>
<dbReference type="PANTHER" id="PTHR22754:SF43">
    <property type="entry name" value="DISCO-INTERACTING PROTEIN 2 HOMOLOG B-A"/>
    <property type="match status" value="1"/>
</dbReference>
<dbReference type="Pfam" id="PF00501">
    <property type="entry name" value="AMP-binding"/>
    <property type="match status" value="2"/>
</dbReference>
<dbReference type="Pfam" id="PF23024">
    <property type="entry name" value="AMP-dom_DIP2-like"/>
    <property type="match status" value="1"/>
</dbReference>
<dbReference type="Pfam" id="PF06464">
    <property type="entry name" value="DMAP_binding"/>
    <property type="match status" value="1"/>
</dbReference>
<dbReference type="SMART" id="SM01137">
    <property type="entry name" value="DMAP_binding"/>
    <property type="match status" value="1"/>
</dbReference>
<dbReference type="SUPFAM" id="SSF56801">
    <property type="entry name" value="Acetyl-CoA synthetase-like"/>
    <property type="match status" value="2"/>
</dbReference>
<dbReference type="PROSITE" id="PS51912">
    <property type="entry name" value="DMAP1_BIND"/>
    <property type="match status" value="1"/>
</dbReference>
<keyword id="KW-0966">Cell projection</keyword>
<keyword id="KW-0524">Neurogenesis</keyword>
<keyword id="KW-1185">Reference proteome</keyword>
<sequence>MADRGVDLAALPKEVREQLAELELELSEGDITQKGYEKKRAKLLAPFVPQTQNVDVSILSTDSTSSPITIPIAAPRQHRAHRSGGTRDDRYRSDIHTEAVQAALARHKEEKMALPMPTKRRSAFVQSPAENCTPPDTSSASEDEGSLRRRQAAISAMLAQNLQSPEYWINRSVQGSSTSSSASSTLSHGDGKTHNHNNHSQGQTSALADVLAHTRIDTNSSSGSVPPDVTSTAPQDRNSRVDLPANIAVKGISRGQSRSSMMDTAGGVPAHSRVSTKIQQLLNTLKRPKRPPLSEFFLDDSEEIVEVPQPDPNTPRPEGRQIIPVKGEPLGVVSNWPPALQAALARWGATQAKSPALTALDITGKPLYTLTYGKLWSRSLKLAYTLLNKLGTKNEPVLKPGDRVALVYPNSDPGMFWVAFYGCLLAEVIPVPIEVPLSRKDAGSQQIGFLLGSCGVGLALTSEVCLKGLPKTPNGEIMQFKGWPRLKWVVTDTKYLTKPSKDWQPHIPTANTDTAYIEYKASKEGTVMGVAVSKISMLTHCQALTQACNYCEGETLVNVLDFKKDSGLWHGVLTSVMNRIHTISVPYAVMKACPLSWVQRVHVHKARVALVKCRDLHWAMMAHRDQKDTNLSSLRMLIVADGANPWSVSSCDAFLNVFQSHGLKPEMICPCASSPEAMTVAIRRPGAPGTPLPARAILSMAGLSHGVIRVNTEDKNSALTVQDVGHVMPGALMCIVKPDGPPMLCKTDEIGEIVLNSRAGGTMYYGLPGVTKNTFEVIPVNSGGTPIGDVPFTRTGLLGFVGPGSLVFVVGKIEGLLSVSGRRHNADDLVATALAVEPVKTVYRGRIAVFSVTVFYDERVVIVAEQRPDANEEDSFQWMSRVLQAIDSIHQVGLYCLALVPANTLPKTPLGGIHVSETKHHFLEGSLHPCNILMCPHTCVTNLPKPRQKQPVGVGPASIMVGNLVAGKRIAQASGRDLGLIDDQEQSRKHQFLSEALQWRAQTDPDHVLYMLLNAKGVAVSTATCSQLHKRAEKITAALLERGGINTGDNVVLLYPPGIDLIASFYGCLYAGCIPVTVRPPHPQNLSATLPTVRMIIDVSKAACILTTQTLMKTLRSKEAAASVNVKTWPNIIDTDDLPRKRPASIYKPPTAEMLAYLDFSVSTTGMLTGVKMSHSAVNALCRSIKLQCELYSSRQIAICMDPYCGLGFVLWCLSSVYSGHQSILIPPMELETSLPLWLSTLSQYKIRDTFCSYSVMELCTKGLGTQTEALKARNVNLSCVRSCVVIAEERPRLALTQSFSKLFKDLGLSPRAVSTAFGSRVNLAICLQGTAGPDPSTVYVDMKSLRHDRVRLVERGAPQSLPLMESGTMLPGVRVIIVNPETKGPLGDSHLGEIWVNSPHNASGYYTIYGEESLQADHFNTRLSFGDTETLWARTGYLGFVKRTELLDASGDRHDALFVVGSLDETLELRGLRYHPIDIETSVSRAHRSIAESAVFTWTNLLVVVVELSGSEQEALDLVPLVTNVVLKEHHLIVGVVVIVDPGVIPINSRGEKQRMHLRDSFLADQLDPIYVAYNM</sequence>
<gene>
    <name type="primary">dip2ba</name>
    <name type="synonym">dip2b</name>
    <name type="ORF">zgc:77348</name>
</gene>
<evidence type="ECO:0000250" key="1">
    <source>
        <dbReference type="UniProtKB" id="Q3UH60"/>
    </source>
</evidence>
<evidence type="ECO:0000255" key="2">
    <source>
        <dbReference type="PROSITE-ProRule" id="PRU01260"/>
    </source>
</evidence>
<evidence type="ECO:0000256" key="3">
    <source>
        <dbReference type="SAM" id="MobiDB-lite"/>
    </source>
</evidence>
<evidence type="ECO:0000305" key="4"/>
<comment type="function">
    <text evidence="1">Negatively regulates axonal outgrowth and is essential for normal synaptic transmission. Not required for regulation of axon polarity. Promotes acetylation of alpha-tubulin.</text>
</comment>
<comment type="subcellular location">
    <subcellularLocation>
        <location evidence="1">Cell projection</location>
        <location evidence="1">Dendrite</location>
    </subcellularLocation>
    <subcellularLocation>
        <location evidence="1">Cell projection</location>
        <location evidence="1">Axon</location>
    </subcellularLocation>
    <subcellularLocation>
        <location evidence="1">Perikaryon</location>
    </subcellularLocation>
</comment>
<comment type="similarity">
    <text evidence="4">Belongs to the DIP2 family.</text>
</comment>
<name>DI2BA_DANRE</name>